<keyword id="KW-0963">Cytoplasm</keyword>
<keyword id="KW-0274">FAD</keyword>
<keyword id="KW-0285">Flavoprotein</keyword>
<keyword id="KW-0520">NAD</keyword>
<keyword id="KW-0819">tRNA processing</keyword>
<name>MNMG_DESHD</name>
<organism>
    <name type="scientific">Desulfitobacterium hafniense (strain DSM 10664 / DCB-2)</name>
    <dbReference type="NCBI Taxonomy" id="272564"/>
    <lineage>
        <taxon>Bacteria</taxon>
        <taxon>Bacillati</taxon>
        <taxon>Bacillota</taxon>
        <taxon>Clostridia</taxon>
        <taxon>Eubacteriales</taxon>
        <taxon>Desulfitobacteriaceae</taxon>
        <taxon>Desulfitobacterium</taxon>
    </lineage>
</organism>
<sequence>MEYLAGNYDVIVVGAGHAGCEAALAAARMGGRTLLITLSLDNIAHMDCNPSLGGPAKGHLVREIDALGGQMGITADETSLQVRMLNTGKGPAVHALRIQSDKQAYHLHMRNAILGQENLVLHQALVERIKTEDGKVSGVVTRTGAFYAAPNVILTSGTYLRGRIIIGDTMYEGGPNGQQTAMNLSGALKELGLELGRFKTGTPPRIHRRSVDYTKFTVQPGDSVPWRYSFMPTQSMFWGRDVDKQIPCWLGYTTPETHQIIQDNIHRAPLYSGKIEGIGPRYCPSIEDKVVRFADRPTHQIFLEPEGWNSDELYMAGLSTSMPEEIQYDIIHSIPGLEKAELLRPGYAIEYDYVKPYQLSLSLEVRKIPGLFTAGQLNGTSGYEEAAAQGLLAGINAALRVQGKEPFIVRRSEGYLGVLIDDLVNKGVKEPYRLLTSRAEYRLILRQDNADLRLTPRGREIGLVKDERWAAFQKKKAAIAEINALWRGTTFSPLNEHLAEVLAGVHSAPVHGGISGEELMRRPEITINEIKQLIPQLAEYDEEALLEAGIEIKYAGYIEKQLAEIERFAKMEERMIPEEIVYDQIKGLSTEGRQRLKEVAPANMGQATRITGVTPADISVLLVYLEQKRRGGQIHAT</sequence>
<feature type="chain" id="PRO_1000122744" description="tRNA uridine 5-carboxymethylaminomethyl modification enzyme MnmG">
    <location>
        <begin position="1"/>
        <end position="637"/>
    </location>
</feature>
<feature type="binding site" evidence="1">
    <location>
        <begin position="14"/>
        <end position="19"/>
    </location>
    <ligand>
        <name>FAD</name>
        <dbReference type="ChEBI" id="CHEBI:57692"/>
    </ligand>
</feature>
<feature type="binding site" evidence="1">
    <location>
        <begin position="279"/>
        <end position="293"/>
    </location>
    <ligand>
        <name>NAD(+)</name>
        <dbReference type="ChEBI" id="CHEBI:57540"/>
    </ligand>
</feature>
<evidence type="ECO:0000255" key="1">
    <source>
        <dbReference type="HAMAP-Rule" id="MF_00129"/>
    </source>
</evidence>
<dbReference type="EMBL" id="CP001336">
    <property type="protein sequence ID" value="ACL22948.1"/>
    <property type="molecule type" value="Genomic_DNA"/>
</dbReference>
<dbReference type="RefSeq" id="WP_015945542.1">
    <property type="nucleotide sequence ID" value="NC_011830.1"/>
</dbReference>
<dbReference type="SMR" id="B8G0L2"/>
<dbReference type="KEGG" id="dhd:Dhaf_4956"/>
<dbReference type="HOGENOM" id="CLU_007831_2_2_9"/>
<dbReference type="Proteomes" id="UP000007726">
    <property type="component" value="Chromosome"/>
</dbReference>
<dbReference type="GO" id="GO:0005829">
    <property type="term" value="C:cytosol"/>
    <property type="evidence" value="ECO:0007669"/>
    <property type="project" value="TreeGrafter"/>
</dbReference>
<dbReference type="GO" id="GO:0050660">
    <property type="term" value="F:flavin adenine dinucleotide binding"/>
    <property type="evidence" value="ECO:0007669"/>
    <property type="project" value="UniProtKB-UniRule"/>
</dbReference>
<dbReference type="GO" id="GO:0030488">
    <property type="term" value="P:tRNA methylation"/>
    <property type="evidence" value="ECO:0007669"/>
    <property type="project" value="TreeGrafter"/>
</dbReference>
<dbReference type="GO" id="GO:0002098">
    <property type="term" value="P:tRNA wobble uridine modification"/>
    <property type="evidence" value="ECO:0007669"/>
    <property type="project" value="InterPro"/>
</dbReference>
<dbReference type="FunFam" id="1.10.150.570:FF:000001">
    <property type="entry name" value="tRNA uridine 5-carboxymethylaminomethyl modification enzyme MnmG"/>
    <property type="match status" value="1"/>
</dbReference>
<dbReference type="FunFam" id="3.50.50.60:FF:000002">
    <property type="entry name" value="tRNA uridine 5-carboxymethylaminomethyl modification enzyme MnmG"/>
    <property type="match status" value="1"/>
</dbReference>
<dbReference type="Gene3D" id="3.50.50.60">
    <property type="entry name" value="FAD/NAD(P)-binding domain"/>
    <property type="match status" value="2"/>
</dbReference>
<dbReference type="Gene3D" id="1.10.150.570">
    <property type="entry name" value="GidA associated domain, C-terminal subdomain"/>
    <property type="match status" value="1"/>
</dbReference>
<dbReference type="Gene3D" id="1.10.10.1800">
    <property type="entry name" value="tRNA uridine 5-carboxymethylaminomethyl modification enzyme MnmG/GidA"/>
    <property type="match status" value="1"/>
</dbReference>
<dbReference type="HAMAP" id="MF_00129">
    <property type="entry name" value="MnmG_GidA"/>
    <property type="match status" value="1"/>
</dbReference>
<dbReference type="InterPro" id="IPR036188">
    <property type="entry name" value="FAD/NAD-bd_sf"/>
</dbReference>
<dbReference type="InterPro" id="IPR049312">
    <property type="entry name" value="GIDA_C_N"/>
</dbReference>
<dbReference type="InterPro" id="IPR004416">
    <property type="entry name" value="MnmG"/>
</dbReference>
<dbReference type="InterPro" id="IPR002218">
    <property type="entry name" value="MnmG-rel"/>
</dbReference>
<dbReference type="InterPro" id="IPR020595">
    <property type="entry name" value="MnmG-rel_CS"/>
</dbReference>
<dbReference type="InterPro" id="IPR026904">
    <property type="entry name" value="MnmG_C"/>
</dbReference>
<dbReference type="InterPro" id="IPR047001">
    <property type="entry name" value="MnmG_C_subdom"/>
</dbReference>
<dbReference type="InterPro" id="IPR044920">
    <property type="entry name" value="MnmG_C_subdom_sf"/>
</dbReference>
<dbReference type="InterPro" id="IPR040131">
    <property type="entry name" value="MnmG_N"/>
</dbReference>
<dbReference type="NCBIfam" id="TIGR00136">
    <property type="entry name" value="mnmG_gidA"/>
    <property type="match status" value="1"/>
</dbReference>
<dbReference type="PANTHER" id="PTHR11806">
    <property type="entry name" value="GLUCOSE INHIBITED DIVISION PROTEIN A"/>
    <property type="match status" value="1"/>
</dbReference>
<dbReference type="PANTHER" id="PTHR11806:SF0">
    <property type="entry name" value="PROTEIN MTO1 HOMOLOG, MITOCHONDRIAL"/>
    <property type="match status" value="1"/>
</dbReference>
<dbReference type="Pfam" id="PF01134">
    <property type="entry name" value="GIDA"/>
    <property type="match status" value="1"/>
</dbReference>
<dbReference type="Pfam" id="PF21680">
    <property type="entry name" value="GIDA_C_1st"/>
    <property type="match status" value="1"/>
</dbReference>
<dbReference type="Pfam" id="PF13932">
    <property type="entry name" value="SAM_GIDA_C"/>
    <property type="match status" value="1"/>
</dbReference>
<dbReference type="SMART" id="SM01228">
    <property type="entry name" value="GIDA_assoc_3"/>
    <property type="match status" value="1"/>
</dbReference>
<dbReference type="SUPFAM" id="SSF51905">
    <property type="entry name" value="FAD/NAD(P)-binding domain"/>
    <property type="match status" value="1"/>
</dbReference>
<dbReference type="PROSITE" id="PS01280">
    <property type="entry name" value="GIDA_1"/>
    <property type="match status" value="1"/>
</dbReference>
<dbReference type="PROSITE" id="PS01281">
    <property type="entry name" value="GIDA_2"/>
    <property type="match status" value="1"/>
</dbReference>
<gene>
    <name evidence="1" type="primary">mnmG</name>
    <name evidence="1" type="synonym">gidA</name>
    <name type="ordered locus">Dhaf_4956</name>
</gene>
<comment type="function">
    <text evidence="1">NAD-binding protein involved in the addition of a carboxymethylaminomethyl (cmnm) group at the wobble position (U34) of certain tRNAs, forming tRNA-cmnm(5)s(2)U34.</text>
</comment>
<comment type="cofactor">
    <cofactor evidence="1">
        <name>FAD</name>
        <dbReference type="ChEBI" id="CHEBI:57692"/>
    </cofactor>
</comment>
<comment type="subunit">
    <text evidence="1">Homodimer. Heterotetramer of two MnmE and two MnmG subunits.</text>
</comment>
<comment type="subcellular location">
    <subcellularLocation>
        <location evidence="1">Cytoplasm</location>
    </subcellularLocation>
</comment>
<comment type="similarity">
    <text evidence="1">Belongs to the MnmG family.</text>
</comment>
<reference key="1">
    <citation type="journal article" date="2012" name="BMC Microbiol.">
        <title>Genome sequence of Desulfitobacterium hafniense DCB-2, a Gram-positive anaerobe capable of dehalogenation and metal reduction.</title>
        <authorList>
            <person name="Kim S.H."/>
            <person name="Harzman C."/>
            <person name="Davis J.K."/>
            <person name="Hutcheson R."/>
            <person name="Broderick J.B."/>
            <person name="Marsh T.L."/>
            <person name="Tiedje J.M."/>
        </authorList>
    </citation>
    <scope>NUCLEOTIDE SEQUENCE [LARGE SCALE GENOMIC DNA]</scope>
    <source>
        <strain>DSM 10664 / DCB-2</strain>
    </source>
</reference>
<protein>
    <recommendedName>
        <fullName evidence="1">tRNA uridine 5-carboxymethylaminomethyl modification enzyme MnmG</fullName>
    </recommendedName>
    <alternativeName>
        <fullName evidence="1">Glucose-inhibited division protein A</fullName>
    </alternativeName>
</protein>
<accession>B8G0L2</accession>
<proteinExistence type="inferred from homology"/>